<name>ENGB_KLEP3</name>
<proteinExistence type="inferred from homology"/>
<organism>
    <name type="scientific">Klebsiella pneumoniae (strain 342)</name>
    <dbReference type="NCBI Taxonomy" id="507522"/>
    <lineage>
        <taxon>Bacteria</taxon>
        <taxon>Pseudomonadati</taxon>
        <taxon>Pseudomonadota</taxon>
        <taxon>Gammaproteobacteria</taxon>
        <taxon>Enterobacterales</taxon>
        <taxon>Enterobacteriaceae</taxon>
        <taxon>Klebsiella/Raoultella group</taxon>
        <taxon>Klebsiella</taxon>
        <taxon>Klebsiella pneumoniae complex</taxon>
    </lineage>
</organism>
<sequence>MTNWNYQLTHFVTSAPDIRHLPADTGIEVAFAGRSNAGKSSALNTLTNQKSLARTSKTPGRTQLINLFEVAEGKRLVDLPGYGYAQVPEEMKIKWQRALGEYLEKRLCLKGLVVLMDIRHPLKDLDQQMIEWAVESDIQVLVLLTKADKLASGARKAQVNMVREAVLAFNGDIQVEPFSSLKKSGVDKLRQKLDSWFNEIPPQEAVEDAE</sequence>
<dbReference type="EMBL" id="CP000964">
    <property type="protein sequence ID" value="ACI06668.1"/>
    <property type="molecule type" value="Genomic_DNA"/>
</dbReference>
<dbReference type="SMR" id="B5XZJ3"/>
<dbReference type="KEGG" id="kpe:KPK_5509"/>
<dbReference type="HOGENOM" id="CLU_033732_1_2_6"/>
<dbReference type="Proteomes" id="UP000001734">
    <property type="component" value="Chromosome"/>
</dbReference>
<dbReference type="GO" id="GO:0005829">
    <property type="term" value="C:cytosol"/>
    <property type="evidence" value="ECO:0007669"/>
    <property type="project" value="TreeGrafter"/>
</dbReference>
<dbReference type="GO" id="GO:0005525">
    <property type="term" value="F:GTP binding"/>
    <property type="evidence" value="ECO:0007669"/>
    <property type="project" value="UniProtKB-UniRule"/>
</dbReference>
<dbReference type="GO" id="GO:0046872">
    <property type="term" value="F:metal ion binding"/>
    <property type="evidence" value="ECO:0007669"/>
    <property type="project" value="UniProtKB-KW"/>
</dbReference>
<dbReference type="GO" id="GO:0000917">
    <property type="term" value="P:division septum assembly"/>
    <property type="evidence" value="ECO:0007669"/>
    <property type="project" value="UniProtKB-KW"/>
</dbReference>
<dbReference type="CDD" id="cd01876">
    <property type="entry name" value="YihA_EngB"/>
    <property type="match status" value="1"/>
</dbReference>
<dbReference type="FunFam" id="3.40.50.300:FF:000098">
    <property type="entry name" value="Probable GTP-binding protein EngB"/>
    <property type="match status" value="1"/>
</dbReference>
<dbReference type="Gene3D" id="3.40.50.300">
    <property type="entry name" value="P-loop containing nucleotide triphosphate hydrolases"/>
    <property type="match status" value="1"/>
</dbReference>
<dbReference type="HAMAP" id="MF_00321">
    <property type="entry name" value="GTPase_EngB"/>
    <property type="match status" value="1"/>
</dbReference>
<dbReference type="InterPro" id="IPR030393">
    <property type="entry name" value="G_ENGB_dom"/>
</dbReference>
<dbReference type="InterPro" id="IPR006073">
    <property type="entry name" value="GTP-bd"/>
</dbReference>
<dbReference type="InterPro" id="IPR019987">
    <property type="entry name" value="GTP-bd_ribosome_bio_YsxC"/>
</dbReference>
<dbReference type="InterPro" id="IPR027417">
    <property type="entry name" value="P-loop_NTPase"/>
</dbReference>
<dbReference type="NCBIfam" id="TIGR03598">
    <property type="entry name" value="GTPase_YsxC"/>
    <property type="match status" value="1"/>
</dbReference>
<dbReference type="PANTHER" id="PTHR11649:SF13">
    <property type="entry name" value="ENGB-TYPE G DOMAIN-CONTAINING PROTEIN"/>
    <property type="match status" value="1"/>
</dbReference>
<dbReference type="PANTHER" id="PTHR11649">
    <property type="entry name" value="MSS1/TRME-RELATED GTP-BINDING PROTEIN"/>
    <property type="match status" value="1"/>
</dbReference>
<dbReference type="Pfam" id="PF01926">
    <property type="entry name" value="MMR_HSR1"/>
    <property type="match status" value="1"/>
</dbReference>
<dbReference type="SUPFAM" id="SSF52540">
    <property type="entry name" value="P-loop containing nucleoside triphosphate hydrolases"/>
    <property type="match status" value="1"/>
</dbReference>
<dbReference type="PROSITE" id="PS51706">
    <property type="entry name" value="G_ENGB"/>
    <property type="match status" value="1"/>
</dbReference>
<comment type="function">
    <text evidence="1">Necessary for normal cell division and for the maintenance of normal septation.</text>
</comment>
<comment type="cofactor">
    <cofactor evidence="1">
        <name>Mg(2+)</name>
        <dbReference type="ChEBI" id="CHEBI:18420"/>
    </cofactor>
</comment>
<comment type="similarity">
    <text evidence="1">Belongs to the TRAFAC class TrmE-Era-EngA-EngB-Septin-like GTPase superfamily. EngB GTPase family.</text>
</comment>
<gene>
    <name evidence="1" type="primary">engB</name>
    <name type="ordered locus">KPK_5509</name>
</gene>
<feature type="chain" id="PRO_1000115981" description="Probable GTP-binding protein EngB">
    <location>
        <begin position="1"/>
        <end position="210"/>
    </location>
</feature>
<feature type="domain" description="EngB-type G" evidence="1">
    <location>
        <begin position="25"/>
        <end position="199"/>
    </location>
</feature>
<feature type="binding site" evidence="1">
    <location>
        <begin position="33"/>
        <end position="40"/>
    </location>
    <ligand>
        <name>GTP</name>
        <dbReference type="ChEBI" id="CHEBI:37565"/>
    </ligand>
</feature>
<feature type="binding site" evidence="1">
    <location>
        <position position="40"/>
    </location>
    <ligand>
        <name>Mg(2+)</name>
        <dbReference type="ChEBI" id="CHEBI:18420"/>
    </ligand>
</feature>
<feature type="binding site" evidence="1">
    <location>
        <begin position="60"/>
        <end position="64"/>
    </location>
    <ligand>
        <name>GTP</name>
        <dbReference type="ChEBI" id="CHEBI:37565"/>
    </ligand>
</feature>
<feature type="binding site" evidence="1">
    <location>
        <position position="62"/>
    </location>
    <ligand>
        <name>Mg(2+)</name>
        <dbReference type="ChEBI" id="CHEBI:18420"/>
    </ligand>
</feature>
<feature type="binding site" evidence="1">
    <location>
        <begin position="78"/>
        <end position="81"/>
    </location>
    <ligand>
        <name>GTP</name>
        <dbReference type="ChEBI" id="CHEBI:37565"/>
    </ligand>
</feature>
<feature type="binding site" evidence="1">
    <location>
        <begin position="145"/>
        <end position="148"/>
    </location>
    <ligand>
        <name>GTP</name>
        <dbReference type="ChEBI" id="CHEBI:37565"/>
    </ligand>
</feature>
<feature type="binding site" evidence="1">
    <location>
        <begin position="178"/>
        <end position="180"/>
    </location>
    <ligand>
        <name>GTP</name>
        <dbReference type="ChEBI" id="CHEBI:37565"/>
    </ligand>
</feature>
<protein>
    <recommendedName>
        <fullName evidence="1">Probable GTP-binding protein EngB</fullName>
    </recommendedName>
</protein>
<accession>B5XZJ3</accession>
<evidence type="ECO:0000255" key="1">
    <source>
        <dbReference type="HAMAP-Rule" id="MF_00321"/>
    </source>
</evidence>
<keyword id="KW-0131">Cell cycle</keyword>
<keyword id="KW-0132">Cell division</keyword>
<keyword id="KW-0342">GTP-binding</keyword>
<keyword id="KW-0460">Magnesium</keyword>
<keyword id="KW-0479">Metal-binding</keyword>
<keyword id="KW-0547">Nucleotide-binding</keyword>
<keyword id="KW-0717">Septation</keyword>
<reference key="1">
    <citation type="journal article" date="2008" name="PLoS Genet.">
        <title>Complete genome sequence of the N2-fixing broad host range endophyte Klebsiella pneumoniae 342 and virulence predictions verified in mice.</title>
        <authorList>
            <person name="Fouts D.E."/>
            <person name="Tyler H.L."/>
            <person name="DeBoy R.T."/>
            <person name="Daugherty S."/>
            <person name="Ren Q."/>
            <person name="Badger J.H."/>
            <person name="Durkin A.S."/>
            <person name="Huot H."/>
            <person name="Shrivastava S."/>
            <person name="Kothari S."/>
            <person name="Dodson R.J."/>
            <person name="Mohamoud Y."/>
            <person name="Khouri H."/>
            <person name="Roesch L.F.W."/>
            <person name="Krogfelt K.A."/>
            <person name="Struve C."/>
            <person name="Triplett E.W."/>
            <person name="Methe B.A."/>
        </authorList>
    </citation>
    <scope>NUCLEOTIDE SEQUENCE [LARGE SCALE GENOMIC DNA]</scope>
    <source>
        <strain>342</strain>
    </source>
</reference>